<proteinExistence type="uncertain"/>
<geneLocation type="chloroplast"/>
<keyword id="KW-0150">Chloroplast</keyword>
<keyword id="KW-0472">Membrane</keyword>
<keyword id="KW-0934">Plastid</keyword>
<keyword id="KW-1001">Plastid inner membrane</keyword>
<keyword id="KW-0653">Protein transport</keyword>
<keyword id="KW-0812">Transmembrane</keyword>
<keyword id="KW-1133">Transmembrane helix</keyword>
<keyword id="KW-0813">Transport</keyword>
<comment type="function">
    <text evidence="1">Involved in protein precursor import into chloroplasts. May be part of an intermediate translocation complex acting as a protein-conducting channel at the inner envelope.</text>
</comment>
<comment type="subunit">
    <text evidence="1">Part of the Tic complex.</text>
</comment>
<comment type="subcellular location">
    <subcellularLocation>
        <location evidence="1">Plastid</location>
        <location evidence="1">Chloroplast inner membrane</location>
        <topology evidence="2">Multi-pass membrane protein</topology>
    </subcellularLocation>
</comment>
<comment type="similarity">
    <text evidence="3">Belongs to the TIC214 family.</text>
</comment>
<comment type="caution">
    <text evidence="3">Could be the product of a pseudogene. In M.polymorpha this protein is in two parts: ORF 1068 (N-terminal) and ORF 464 (C-terminal). It also could be due to a frameshift error.</text>
</comment>
<evidence type="ECO:0000250" key="1">
    <source>
        <dbReference type="UniProtKB" id="P56785"/>
    </source>
</evidence>
<evidence type="ECO:0000255" key="2"/>
<evidence type="ECO:0000305" key="3"/>
<name>T214A_MARPO</name>
<reference key="1">
    <citation type="journal article" date="1986" name="Nature">
        <title>Chloroplast gene organization deduced from complete sequence of liverwort Marchantia polymorpha chloroplast DNA.</title>
        <authorList>
            <person name="Ohyama K."/>
            <person name="Fukuzawa H."/>
            <person name="Kohchi T."/>
            <person name="Shirai H."/>
            <person name="Sano T."/>
            <person name="Sano S."/>
            <person name="Umesono K."/>
            <person name="Shiki Y."/>
            <person name="Takeuchi M."/>
            <person name="Chang Z."/>
            <person name="Aota S."/>
            <person name="Inokuchi H."/>
            <person name="Ozeki H."/>
        </authorList>
    </citation>
    <scope>NUCLEOTIDE SEQUENCE [LARGE SCALE GENOMIC DNA]</scope>
</reference>
<reference key="2">
    <citation type="journal article" date="1988" name="J. Mol. Biol.">
        <title>Structure and organization of Marchantia polymorpha chloroplast genome. IV. Inverted repeat and small single copy regions.</title>
        <authorList>
            <person name="Kohchi T."/>
            <person name="Shirai H."/>
            <person name="Fukuzawa H."/>
            <person name="Sano T."/>
            <person name="Komano T."/>
            <person name="Umesono K."/>
            <person name="Inokuchi H."/>
            <person name="Ozeki H."/>
            <person name="Ohyama K."/>
        </authorList>
    </citation>
    <scope>NUCLEOTIDE SEQUENCE [GENOMIC DNA]</scope>
</reference>
<accession>P12221</accession>
<accession>Q9T2G3</accession>
<protein>
    <recommendedName>
        <fullName evidence="1">Putative protein TIC 214 N-terminal part</fullName>
    </recommendedName>
    <alternativeName>
        <fullName>ORF 1068</fullName>
    </alternativeName>
    <alternativeName>
        <fullName evidence="1">Translocon at the inner envelope membrane of chloroplasts 214</fullName>
        <shortName evidence="1">AtTIC214</shortName>
    </alternativeName>
</protein>
<feature type="chain" id="PRO_0000217300" description="Putative protein TIC 214 N-terminal part">
    <location>
        <begin position="1"/>
        <end position="1068"/>
    </location>
</feature>
<feature type="transmembrane region" description="Helical" evidence="2">
    <location>
        <begin position="11"/>
        <end position="31"/>
    </location>
</feature>
<feature type="transmembrane region" description="Helical" evidence="2">
    <location>
        <begin position="68"/>
        <end position="88"/>
    </location>
</feature>
<feature type="transmembrane region" description="Helical" evidence="2">
    <location>
        <begin position="92"/>
        <end position="112"/>
    </location>
</feature>
<feature type="transmembrane region" description="Helical" evidence="2">
    <location>
        <begin position="131"/>
        <end position="151"/>
    </location>
</feature>
<feature type="transmembrane region" description="Helical" evidence="2">
    <location>
        <begin position="166"/>
        <end position="186"/>
    </location>
</feature>
<feature type="transmembrane region" description="Helical" evidence="2">
    <location>
        <begin position="213"/>
        <end position="233"/>
    </location>
</feature>
<gene>
    <name evidence="1" type="primary">TIC214</name>
    <name type="synonym">ycf1</name>
</gene>
<organism>
    <name type="scientific">Marchantia polymorpha</name>
    <name type="common">Common liverwort</name>
    <name type="synonym">Marchantia aquatica</name>
    <dbReference type="NCBI Taxonomy" id="3197"/>
    <lineage>
        <taxon>Eukaryota</taxon>
        <taxon>Viridiplantae</taxon>
        <taxon>Streptophyta</taxon>
        <taxon>Embryophyta</taxon>
        <taxon>Marchantiophyta</taxon>
        <taxon>Marchantiopsida</taxon>
        <taxon>Marchantiidae</taxon>
        <taxon>Marchantiales</taxon>
        <taxon>Marchantiaceae</taxon>
        <taxon>Marchantia</taxon>
    </lineage>
</organism>
<sequence length="1068" mass="127657">MITSIPLLLSVLWVPILSWINFSSTFFLFGIYYGFLTTLPIGPSQLLSIRAFLLEGNFSGIAAVSGLITGQLLIFLSIFYSPLYVLLIKPHLLTLLVLPYILFYWYKIKDLIDYQSLKPITSIKDTRISKIFFDSFIFQLFNPVVLPSPVLARLLNIFLFRYSNNFIFLLSSFLGWCFGQFLFVSLGKLLLFRIESDSPILYLLVKRIIYRTFSIIILSFSLLHLSRAPVPFITKKLNDNLQFNLSKPEDSFVLTKSWPTLFFDYRKWNRPLRYIENSRFSSQSPIKKKVSQYFFNISLSDGKPRLSFTYLPSLYYFEKNLQKSSINFNLFSSNEIYEKWIKNKKNKKLKIYKEFKNRFKFLDNGFFLAEIIEKKNILSTFEGNIFTKICDPLLIKQYDKKMIVSKSPWLLTEKSYKLTKTQKTLTFSKKDNKLKKWISNQCQEFEDKNFILPWEPLTQDARRILSLLINKSKKTKIDTNLKQMNFFDENATQLLNKQNLSSIENTRKKINRKSNLNWELILNLSPRQKILFLNYLQKDKWNTLKISWKNFFLGDFTQIKNILFLLTKIIKPDQNYQFQEINKEIPRWTSKLKNDKFDVIAIGVTDIRQRKVKNLGYLIKGKDKRRKIIRRFSQQSDFRRKLVKGSMRARRRKTLIWKIFQVKINSPFFLRIMDKPNLNVNNVLKIKPTFQNILEKKKKESLNQKALFIKRTKADRFAIANRWDFPLAQWGRSWLLLIQSHLRKYILLPILIIFKNVIRLFLFQIPEWNQDWYEWNKEIHIRCTYDGTEVSEKELPEQWLRDGLQIKIIYPFYLKPWHNIQNRNNLPNKKNEKLDLIYDDTNFLQNLVKTKEHSNNLVKKKKLNYCYLTAWGFQTNLPFGNIKKQPSFWKPIKKKLKKNMFFKPYQNLKNISTKNKLYKISDVENLKNFNSKKKEYINPNLNNLDFKKKNVVITKLNNQNTLLKQNTDNDIFSINFEYKTSIYINNLENLLKKKHISIEKYLKKQKTLNLKKKLIMIKQKTIKILKKNVQLIKKLPKNLKINIQKIYINLKINKTKLINNISKFFQDN</sequence>
<dbReference type="EMBL" id="X04465">
    <property type="protein sequence ID" value="CAA28143.1"/>
    <property type="molecule type" value="Genomic_DNA"/>
</dbReference>
<dbReference type="PIR" id="S01519">
    <property type="entry name" value="S01519"/>
</dbReference>
<dbReference type="RefSeq" id="NP_039357.1">
    <property type="nucleotide sequence ID" value="NC_001319.1"/>
</dbReference>
<dbReference type="SMR" id="P12221"/>
<dbReference type="GO" id="GO:0009706">
    <property type="term" value="C:chloroplast inner membrane"/>
    <property type="evidence" value="ECO:0007669"/>
    <property type="project" value="UniProtKB-SubCell"/>
</dbReference>
<dbReference type="GO" id="GO:0015031">
    <property type="term" value="P:protein transport"/>
    <property type="evidence" value="ECO:0007669"/>
    <property type="project" value="UniProtKB-KW"/>
</dbReference>
<dbReference type="InterPro" id="IPR008896">
    <property type="entry name" value="TIC214"/>
</dbReference>
<dbReference type="PANTHER" id="PTHR33163:SF40">
    <property type="entry name" value="PROTEIN TIC 214"/>
    <property type="match status" value="1"/>
</dbReference>
<dbReference type="PANTHER" id="PTHR33163">
    <property type="entry name" value="PROTEIN TIC 214-RELATED"/>
    <property type="match status" value="1"/>
</dbReference>
<dbReference type="Pfam" id="PF05758">
    <property type="entry name" value="Ycf1"/>
    <property type="match status" value="3"/>
</dbReference>